<name>RDMC_STREF</name>
<organism>
    <name type="scientific">Streptomyces purpurascens</name>
    <dbReference type="NCBI Taxonomy" id="1924"/>
    <lineage>
        <taxon>Bacteria</taxon>
        <taxon>Bacillati</taxon>
        <taxon>Actinomycetota</taxon>
        <taxon>Actinomycetes</taxon>
        <taxon>Kitasatosporales</taxon>
        <taxon>Streptomycetaceae</taxon>
        <taxon>Streptomyces</taxon>
    </lineage>
</organism>
<protein>
    <recommendedName>
        <fullName>Aclacinomycin methylesterase RdmC</fullName>
        <ecNumber>3.1.1.95</ecNumber>
    </recommendedName>
</protein>
<evidence type="ECO:0000255" key="1"/>
<evidence type="ECO:0000269" key="2">
    <source>
    </source>
</evidence>
<evidence type="ECO:0000269" key="3">
    <source>
    </source>
</evidence>
<evidence type="ECO:0000269" key="4">
    <source>
    </source>
</evidence>
<evidence type="ECO:0000305" key="5"/>
<evidence type="ECO:0007829" key="6">
    <source>
        <dbReference type="PDB" id="1Q0R"/>
    </source>
</evidence>
<sequence>MSERIVPSGDVELWSDDFGDPADPALLLVMGGNLSALGWPDEFARRLADGGLHVIRYDHRDTGRSTTRDFAAHPYGFGELAADAVAVLDGWGVDRAHVVGLSMGATITQVIALDHHDRLSSLTMLLGGGLDIDFDANIERVMRGEPTLDGLPGPQQPFLDALALMNQPAEGRAAEVAKRVSKWRILSGTGVPFDDAEYARWEERAIDHAGGVLAEPYAHYSLTLPPPSRAAELREVTVPTLVIQAEHDPIAPAPHGKHLAGLIPTARLAEIPGMGHALPSSVHGPLAEVILAHTRSAA</sequence>
<gene>
    <name type="primary">rdmC</name>
</gene>
<comment type="function">
    <text evidence="2 4">Involved in the biosynthesis of the anthracycline aclacinomycin which is an aromatic polyketide antibiotic that exhibits high cytotoxicity and is widely applied in the chemotherapy of a variety of cancers. Catalyzes the removal of the methoxy group from the C-15 position of aclacinomycin T and A to yield 15-demethoxyaclacinomycin T and A, respectively.</text>
</comment>
<comment type="catalytic activity">
    <reaction evidence="2">
        <text>aclacinomycin T + H2O = 15-demethylaclacinomycin T + methanol</text>
        <dbReference type="Rhea" id="RHEA:37891"/>
        <dbReference type="ChEBI" id="CHEBI:15377"/>
        <dbReference type="ChEBI" id="CHEBI:17790"/>
        <dbReference type="ChEBI" id="CHEBI:74354"/>
        <dbReference type="ChEBI" id="CHEBI:77979"/>
        <dbReference type="EC" id="3.1.1.95"/>
    </reaction>
</comment>
<comment type="biophysicochemical properties">
    <kinetics>
        <KM evidence="2">15.5 uM for aclacinomycin T (at pH 7.5 and 37 degrees Celsius)</KM>
    </kinetics>
    <phDependence>
        <text evidence="2">Optimum pH is 7.5.</text>
    </phDependence>
    <temperatureDependence>
        <text evidence="2">Optimum temperature is 37 degrees Celsius. The activity at 30 and 45 degrees Celsius is 58% and 87% of the optimal activity, respectively. Exceptionally high temperature stability.</text>
    </temperatureDependence>
</comment>
<comment type="pathway">
    <text>Antibiotic biosynthesis; aclacinomycin biosynthesis.</text>
</comment>
<comment type="subunit">
    <text evidence="2 3">Monomer.</text>
</comment>
<comment type="similarity">
    <text evidence="5">Belongs to the AB hydrolase superfamily. Hydrolase RdmC family.</text>
</comment>
<feature type="initiator methionine" description="Removed" evidence="2">
    <location>
        <position position="1"/>
    </location>
</feature>
<feature type="chain" id="PRO_0000425719" description="Aclacinomycin methylesterase RdmC">
    <location>
        <begin position="2"/>
        <end position="298"/>
    </location>
</feature>
<feature type="domain" description="AB hydrolase-1" evidence="1">
    <location>
        <begin position="24"/>
        <end position="277"/>
    </location>
</feature>
<feature type="active site" evidence="1">
    <location>
        <position position="102"/>
    </location>
</feature>
<feature type="active site" evidence="1">
    <location>
        <position position="248"/>
    </location>
</feature>
<feature type="active site" evidence="1">
    <location>
        <position position="276"/>
    </location>
</feature>
<feature type="strand" evidence="6">
    <location>
        <begin position="3"/>
        <end position="8"/>
    </location>
</feature>
<feature type="strand" evidence="6">
    <location>
        <begin position="11"/>
        <end position="19"/>
    </location>
</feature>
<feature type="strand" evidence="6">
    <location>
        <begin position="25"/>
        <end position="29"/>
    </location>
</feature>
<feature type="helix" evidence="6">
    <location>
        <begin position="36"/>
        <end position="38"/>
    </location>
</feature>
<feature type="helix" evidence="6">
    <location>
        <begin position="41"/>
        <end position="48"/>
    </location>
</feature>
<feature type="turn" evidence="6">
    <location>
        <begin position="49"/>
        <end position="51"/>
    </location>
</feature>
<feature type="strand" evidence="6">
    <location>
        <begin position="53"/>
        <end position="57"/>
    </location>
</feature>
<feature type="turn" evidence="6">
    <location>
        <begin position="70"/>
        <end position="72"/>
    </location>
</feature>
<feature type="helix" evidence="6">
    <location>
        <begin position="77"/>
        <end position="90"/>
    </location>
</feature>
<feature type="strand" evidence="6">
    <location>
        <begin position="94"/>
        <end position="101"/>
    </location>
</feature>
<feature type="helix" evidence="6">
    <location>
        <begin position="103"/>
        <end position="114"/>
    </location>
</feature>
<feature type="helix" evidence="6">
    <location>
        <begin position="116"/>
        <end position="118"/>
    </location>
</feature>
<feature type="strand" evidence="6">
    <location>
        <begin position="119"/>
        <end position="126"/>
    </location>
</feature>
<feature type="helix" evidence="6">
    <location>
        <begin position="134"/>
        <end position="143"/>
    </location>
</feature>
<feature type="helix" evidence="6">
    <location>
        <begin position="156"/>
        <end position="166"/>
    </location>
</feature>
<feature type="helix" evidence="6">
    <location>
        <begin position="172"/>
        <end position="187"/>
    </location>
</feature>
<feature type="strand" evidence="6">
    <location>
        <begin position="189"/>
        <end position="191"/>
    </location>
</feature>
<feature type="helix" evidence="6">
    <location>
        <begin position="195"/>
        <end position="208"/>
    </location>
</feature>
<feature type="turn" evidence="6">
    <location>
        <begin position="209"/>
        <end position="211"/>
    </location>
</feature>
<feature type="helix" evidence="6">
    <location>
        <begin position="218"/>
        <end position="221"/>
    </location>
</feature>
<feature type="helix" evidence="6">
    <location>
        <begin position="227"/>
        <end position="235"/>
    </location>
</feature>
<feature type="strand" evidence="6">
    <location>
        <begin position="240"/>
        <end position="245"/>
    </location>
</feature>
<feature type="strand" evidence="6">
    <location>
        <begin position="249"/>
        <end position="251"/>
    </location>
</feature>
<feature type="helix" evidence="6">
    <location>
        <begin position="255"/>
        <end position="261"/>
    </location>
</feature>
<feature type="strand" evidence="6">
    <location>
        <begin position="266"/>
        <end position="271"/>
    </location>
</feature>
<feature type="helix" evidence="6">
    <location>
        <begin position="280"/>
        <end position="282"/>
    </location>
</feature>
<feature type="helix" evidence="6">
    <location>
        <begin position="283"/>
        <end position="296"/>
    </location>
</feature>
<dbReference type="EC" id="3.1.1.95"/>
<dbReference type="EMBL" id="U10405">
    <property type="protein sequence ID" value="AAA83422.1"/>
    <property type="molecule type" value="Genomic_DNA"/>
</dbReference>
<dbReference type="PIR" id="A57139">
    <property type="entry name" value="A57139"/>
</dbReference>
<dbReference type="RefSeq" id="WP_189725817.1">
    <property type="nucleotide sequence ID" value="NZ_BMUK01000008.1"/>
</dbReference>
<dbReference type="PDB" id="1Q0R">
    <property type="method" value="X-ray"/>
    <property type="resolution" value="1.45 A"/>
    <property type="chains" value="A=1-298"/>
</dbReference>
<dbReference type="PDB" id="1Q0Z">
    <property type="method" value="X-ray"/>
    <property type="resolution" value="1.95 A"/>
    <property type="chains" value="A=1-298"/>
</dbReference>
<dbReference type="PDBsum" id="1Q0R"/>
<dbReference type="PDBsum" id="1Q0Z"/>
<dbReference type="SMR" id="Q54528"/>
<dbReference type="DrugBank" id="DB04131">
    <property type="generic name" value="10-(4-Dimethylamino-5-Hydroxy-6-Methyl-Tetrahydro-Pyran-2-Yloxy)-8-Ethyl-1,8,11-Trihydroxy-7,8,9,10-Tetrahydro-Naphthacene-5,12-Dione"/>
</dbReference>
<dbReference type="DrugBank" id="DB01806">
    <property type="generic name" value="10-decarboxymethylaclacinomycin A"/>
</dbReference>
<dbReference type="ESTHER" id="strpu-rdmC">
    <property type="family name" value="Aclacinomycin-methylesterase_RdmC"/>
</dbReference>
<dbReference type="KEGG" id="ag:AAA83422"/>
<dbReference type="BioCyc" id="MetaCyc:MONOMER-18184"/>
<dbReference type="BRENDA" id="3.1.1.95">
    <property type="organism ID" value="6079"/>
</dbReference>
<dbReference type="UniPathway" id="UPA01043"/>
<dbReference type="EvolutionaryTrace" id="Q54528"/>
<dbReference type="GO" id="GO:0102530">
    <property type="term" value="F:aclacinomycin T methylesterase activity"/>
    <property type="evidence" value="ECO:0000314"/>
    <property type="project" value="UniProtKB"/>
</dbReference>
<dbReference type="GO" id="GO:0004806">
    <property type="term" value="F:triacylglycerol lipase activity"/>
    <property type="evidence" value="ECO:0007669"/>
    <property type="project" value="TreeGrafter"/>
</dbReference>
<dbReference type="GO" id="GO:0017000">
    <property type="term" value="P:antibiotic biosynthetic process"/>
    <property type="evidence" value="ECO:0007669"/>
    <property type="project" value="UniProtKB-KW"/>
</dbReference>
<dbReference type="GO" id="GO:0046503">
    <property type="term" value="P:glycerolipid catabolic process"/>
    <property type="evidence" value="ECO:0007669"/>
    <property type="project" value="TreeGrafter"/>
</dbReference>
<dbReference type="FunFam" id="3.40.50.1820:FF:000592">
    <property type="entry name" value="Aclacinomycin methylesterase RdmC"/>
    <property type="match status" value="1"/>
</dbReference>
<dbReference type="Gene3D" id="3.40.50.1820">
    <property type="entry name" value="alpha/beta hydrolase"/>
    <property type="match status" value="1"/>
</dbReference>
<dbReference type="InterPro" id="IPR050471">
    <property type="entry name" value="AB_hydrolase"/>
</dbReference>
<dbReference type="InterPro" id="IPR000073">
    <property type="entry name" value="AB_hydrolase_1"/>
</dbReference>
<dbReference type="InterPro" id="IPR029058">
    <property type="entry name" value="AB_hydrolase_fold"/>
</dbReference>
<dbReference type="PANTHER" id="PTHR43433:SF5">
    <property type="entry name" value="AB HYDROLASE-1 DOMAIN-CONTAINING PROTEIN"/>
    <property type="match status" value="1"/>
</dbReference>
<dbReference type="PANTHER" id="PTHR43433">
    <property type="entry name" value="HYDROLASE, ALPHA/BETA FOLD FAMILY PROTEIN"/>
    <property type="match status" value="1"/>
</dbReference>
<dbReference type="Pfam" id="PF00561">
    <property type="entry name" value="Abhydrolase_1"/>
    <property type="match status" value="1"/>
</dbReference>
<dbReference type="SUPFAM" id="SSF53474">
    <property type="entry name" value="alpha/beta-Hydrolases"/>
    <property type="match status" value="1"/>
</dbReference>
<accession>Q54528</accession>
<proteinExistence type="evidence at protein level"/>
<reference key="1">
    <citation type="journal article" date="1994" name="Microbiology">
        <title>Hybrid anthracycline antibiotics: production of new anthracyclines by cloned genes from Streptomyces purpurascens in Streptomyces galilaeus.</title>
        <authorList>
            <person name="Niemi J."/>
            <person name="Ylihonko K."/>
            <person name="Hakala J."/>
            <person name="Parssinen R."/>
            <person name="Kopio A."/>
            <person name="Mantsala P."/>
        </authorList>
    </citation>
    <scope>NUCLEOTIDE SEQUENCE [GENOMIC DNA]</scope>
    <source>
        <strain>ATCC 25489 / DSM 40310 / JCM 4509 / NBRC 13077 / Maria 515</strain>
    </source>
</reference>
<reference key="2">
    <citation type="journal article" date="1995" name="J. Bacteriol.">
        <title>Nucleotide sequences and expression of genes from Streptomyces purpurascens that cause the production of new anthracyclines in Streptomyces galilaeus.</title>
        <authorList>
            <person name="Niemi J."/>
            <person name="Mantsala P."/>
        </authorList>
    </citation>
    <scope>NUCLEOTIDE SEQUENCE [GENOMIC DNA]</scope>
    <scope>FUNCTION</scope>
    <source>
        <strain>ATCC 25489 / DSM 40310 / JCM 4509 / NBRC 13077 / Maria 515</strain>
    </source>
</reference>
<reference key="3">
    <citation type="journal article" date="2000" name="Biochim. Biophys. Acta">
        <title>Modifications of aclacinomycin T by aclacinomycin methyl esterase (RdmC) and aclacinomycin-10-hydroxylase (RdmB) from Streptomyces purpurascens.</title>
        <authorList>
            <person name="Wang Y."/>
            <person name="Niemi J."/>
            <person name="Airas K."/>
            <person name="Ylihonko K."/>
            <person name="Hakala J."/>
            <person name="Mantsala P."/>
        </authorList>
    </citation>
    <scope>PROTEIN SEQUENCE OF 2-13</scope>
    <scope>FUNCTION</scope>
    <scope>CATALYTIC ACTIVITY</scope>
    <scope>BIOPHYSICOCHEMICAL PROPERTIES</scope>
    <scope>SUBSTRATE SPECIFICITY</scope>
    <scope>SUBUNIT</scope>
    <source>
        <strain>ATCC 25489 / DSM 40310 / JCM 4509 / NBRC 13077 / Maria 515</strain>
    </source>
</reference>
<reference key="4">
    <citation type="journal article" date="2003" name="J. Biol. Chem.">
        <title>Crystal structure of aclacinomycin methylesterase with bound product analogues: implications for anthracycline recognition and mechanism.</title>
        <authorList>
            <person name="Jansson A."/>
            <person name="Niemi J."/>
            <person name="Mantsala P."/>
            <person name="Schneider G."/>
        </authorList>
    </citation>
    <scope>X-RAY CRYSTALLOGRAPHY (1.45 ANGSTROMS) IN COMPLEX WITH PRODUCT ANALOGS</scope>
    <scope>ACTIVE SITE</scope>
    <scope>SUBUNIT</scope>
</reference>
<keyword id="KW-0002">3D-structure</keyword>
<keyword id="KW-0045">Antibiotic biosynthesis</keyword>
<keyword id="KW-0903">Direct protein sequencing</keyword>
<keyword id="KW-0378">Hydrolase</keyword>